<reference key="1">
    <citation type="journal article" date="1997" name="Virology">
        <title>A conserved African swine fever virus IkappaB homolog, 5EL, is nonessential for growth in vitro and virulence in domestic swine.</title>
        <authorList>
            <person name="Neilan J.G."/>
            <person name="Lu Z."/>
            <person name="Kutish G.F."/>
            <person name="Zsak L."/>
            <person name="Lewis T.L."/>
            <person name="Rock D.L."/>
        </authorList>
    </citation>
    <scope>NUCLEOTIDE SEQUENCE [GENOMIC DNA]</scope>
</reference>
<reference key="2">
    <citation type="submission" date="2003-03" db="EMBL/GenBank/DDBJ databases">
        <title>African swine fever virus genomes.</title>
        <authorList>
            <person name="Kutish G.F."/>
            <person name="Rock D.L."/>
        </authorList>
    </citation>
    <scope>NUCLEOTIDE SEQUENCE [LARGE SCALE GENOMIC DNA]</scope>
</reference>
<reference key="3">
    <citation type="journal article" date="1996" name="J. Virol.">
        <title>An IkappaB homolog encoded by African swine fever virus provides a novel mechanism for downregulation of proinflammatory cytokine responses in host macrophages.</title>
        <authorList>
            <person name="Powell P.P."/>
            <person name="Dixon L.K."/>
            <person name="Parkhouse R.M."/>
        </authorList>
    </citation>
    <scope>FUNCTION</scope>
</reference>
<reference key="4">
    <citation type="journal article" date="1998" name="Science">
        <title>A viral mechanism for inhibition of the cellular phosphatase calcineurin.</title>
        <authorList>
            <person name="Miskin J.E."/>
            <person name="Abrams C.C."/>
            <person name="Goatley L.C."/>
            <person name="Dixon L.K."/>
        </authorList>
    </citation>
    <scope>FUNCTION</scope>
    <scope>INTERACTION WITH HOST PPIA</scope>
    <scope>INTERACTION WITH HOST PPP3CA</scope>
</reference>
<reference key="5">
    <citation type="journal article" date="2000" name="J. Virol.">
        <title>African swine fever virus protein A238L interacts with the cellular phosphatase calcineurin via a binding domain similar to that of NFAT.</title>
        <authorList>
            <person name="Miskin J.E."/>
            <person name="Abrams C.C."/>
            <person name="Dixon L.K."/>
        </authorList>
    </citation>
    <scope>INTERACTION WITH HOST PPP3CA</scope>
</reference>
<reference key="6">
    <citation type="journal article" date="2013" name="PLoS Biol.">
        <title>The molecular mechanism of substrate engagement and immunosuppressant inhibition of calcineurin.</title>
        <authorList>
            <person name="Grigoriu S."/>
            <person name="Bond R."/>
            <person name="Cossio P."/>
            <person name="Chen J.A."/>
            <person name="Ly N."/>
            <person name="Hummer G."/>
            <person name="Page R."/>
            <person name="Cyert M.S."/>
            <person name="Peti W."/>
        </authorList>
    </citation>
    <scope>X-RAY CRYSTALLOGRAPHY (1.70 ANGSTROMS) OF 200-239 IN COMPLEX WITH HUMAN PPP3R1 AND PPP3CA</scope>
    <scope>INTERACTION WITH HOST PPP3CA</scope>
    <scope>INTERACTION WITH HOST PPP3R1</scope>
    <scope>FUNCTION</scope>
    <scope>MOTIF</scope>
    <scope>MUTAGENESIS OF 200-ARG--LYS-239; 206-PRO--THR-211 AND 228-PHE--LYS-232</scope>
</reference>
<proteinExistence type="evidence at protein level"/>
<sequence length="239" mass="28080">MDTIGLFSVEAEHLFVEWVKKCIKKGDLTLFETLFNADPWIVNRCNKNKITVFMLICIYGRLDFLRFLFKQESYPGEIVNHYRRDKDGNSAWHYLAEKNNHLLLEEVLDYFGKNGIRVCFPNFNGVTPIMKAAMRGRTLSVLSLLKYGANPNRKDYLKGFTTWDWAVFTGHADLVKTLNKGYQKPLFMHFPLYKLDVFHRRFKKKPKIIITGCEDNVYEKLPEQNSNFLCVKKLNKYGK</sequence>
<dbReference type="EMBL" id="AF014479">
    <property type="protein sequence ID" value="AAB71361.1"/>
    <property type="molecule type" value="Genomic_DNA"/>
</dbReference>
<dbReference type="EMBL" id="AY261361">
    <property type="status" value="NOT_ANNOTATED_CDS"/>
    <property type="molecule type" value="Genomic_DNA"/>
</dbReference>
<dbReference type="PDB" id="4F0Z">
    <property type="method" value="X-ray"/>
    <property type="resolution" value="1.70 A"/>
    <property type="chains" value="C=200-239"/>
</dbReference>
<dbReference type="PDBsum" id="4F0Z"/>
<dbReference type="SMR" id="O36972"/>
<dbReference type="DIP" id="DIP-60108N"/>
<dbReference type="ELM" id="O36972"/>
<dbReference type="IntAct" id="O36972">
    <property type="interactions" value="2"/>
</dbReference>
<dbReference type="Proteomes" id="UP000000860">
    <property type="component" value="Segment"/>
</dbReference>
<dbReference type="GO" id="GO:0030430">
    <property type="term" value="C:host cell cytoplasm"/>
    <property type="evidence" value="ECO:0007669"/>
    <property type="project" value="UniProtKB-SubCell"/>
</dbReference>
<dbReference type="GO" id="GO:0042025">
    <property type="term" value="C:host cell nucleus"/>
    <property type="evidence" value="ECO:0007669"/>
    <property type="project" value="UniProtKB-SubCell"/>
</dbReference>
<dbReference type="GO" id="GO:0004865">
    <property type="term" value="F:protein serine/threonine phosphatase inhibitor activity"/>
    <property type="evidence" value="ECO:0000315"/>
    <property type="project" value="GO_Central"/>
</dbReference>
<dbReference type="GO" id="GO:0085034">
    <property type="term" value="P:symbiont-mediated suppression of host NF-kappaB cascade"/>
    <property type="evidence" value="ECO:0007669"/>
    <property type="project" value="UniProtKB-KW"/>
</dbReference>
<dbReference type="FunFam" id="1.25.40.20:FF:001205">
    <property type="entry name" value="Predicted protein"/>
    <property type="match status" value="1"/>
</dbReference>
<dbReference type="Gene3D" id="1.25.40.20">
    <property type="entry name" value="Ankyrin repeat-containing domain"/>
    <property type="match status" value="1"/>
</dbReference>
<dbReference type="IDEAL" id="IID90028"/>
<dbReference type="InterPro" id="IPR002110">
    <property type="entry name" value="Ankyrin_rpt"/>
</dbReference>
<dbReference type="InterPro" id="IPR036770">
    <property type="entry name" value="Ankyrin_rpt-contain_sf"/>
</dbReference>
<dbReference type="PANTHER" id="PTHR24198">
    <property type="entry name" value="ANKYRIN REPEAT AND PROTEIN KINASE DOMAIN-CONTAINING PROTEIN"/>
    <property type="match status" value="1"/>
</dbReference>
<dbReference type="PANTHER" id="PTHR24198:SF165">
    <property type="entry name" value="ANKYRIN REPEAT-CONTAINING PROTEIN-RELATED"/>
    <property type="match status" value="1"/>
</dbReference>
<dbReference type="Pfam" id="PF00023">
    <property type="entry name" value="Ank"/>
    <property type="match status" value="1"/>
</dbReference>
<dbReference type="SMART" id="SM00248">
    <property type="entry name" value="ANK"/>
    <property type="match status" value="4"/>
</dbReference>
<dbReference type="SUPFAM" id="SSF48403">
    <property type="entry name" value="Ankyrin repeat"/>
    <property type="match status" value="1"/>
</dbReference>
<dbReference type="PROSITE" id="PS50297">
    <property type="entry name" value="ANK_REP_REGION"/>
    <property type="match status" value="1"/>
</dbReference>
<dbReference type="PROSITE" id="PS50088">
    <property type="entry name" value="ANK_REPEAT"/>
    <property type="match status" value="1"/>
</dbReference>
<gene>
    <name type="primary">A238L</name>
    <name type="ordered locus">Mal-047</name>
    <name type="ORF">5EL</name>
</gene>
<organismHost>
    <name type="scientific">Ornithodoros</name>
    <name type="common">relapsing fever ticks</name>
    <dbReference type="NCBI Taxonomy" id="6937"/>
</organismHost>
<organismHost>
    <name type="scientific">Phacochoerus aethiopicus</name>
    <name type="common">Warthog</name>
    <dbReference type="NCBI Taxonomy" id="85517"/>
</organismHost>
<organismHost>
    <name type="scientific">Phacochoerus africanus</name>
    <name type="common">Warthog</name>
    <dbReference type="NCBI Taxonomy" id="41426"/>
</organismHost>
<organismHost>
    <name type="scientific">Potamochoerus larvatus</name>
    <name type="common">Bushpig</name>
    <dbReference type="NCBI Taxonomy" id="273792"/>
</organismHost>
<organismHost>
    <name type="scientific">Sus scrofa</name>
    <name type="common">Pig</name>
    <dbReference type="NCBI Taxonomy" id="9823"/>
</organismHost>
<comment type="function">
    <text evidence="1 3 4 5">IkB-like protein that inhibits the binding of NF-kappa-B to DNA, thereby downregulating pro-inflammatory cytokine production (PubMed:8970976). Forms a heterodimer with the NF-kappa-B subunit RELA/p65 and prevents the activation of the NF-kappa-B transcription factor (By similarity). Inhibits calcineurin function, which is required for the induction of nuclear factor of activated T cells (NFAT)-dependent immune response genes (PubMed:23468591, PubMed:9677199). Prevents the binding of substrates to calcineurin without affecting the phosphatase activity (PubMed:23468591). Does not contain the serine residues that are phosphorylated by host IkB kinase and thus is not degraded following stimulation of the NFkB pathway (By similarity).</text>
</comment>
<comment type="subunit">
    <text evidence="1 2 3 5">Interacts with host PPIA (PubMed:9677199). Interacts with host PPP3CA/Calcineurin (PubMed:11000210, PubMed:23468591, PubMed:9677199). Interacts with host RELA/p65; interaction of the 32 kDa form with host RELA results in the formation of a stable complex with NF-kappa-B (By similarity). Interacts with host PPP3R1 (PubMed:23468591). Interacts with host EP300; this interaction inhibits the association of host EP300 with host RELA, JUN and NFATC2 (By similarity).</text>
</comment>
<comment type="interaction">
    <interactant intactId="EBI-16039701">
        <id>O36972</id>
    </interactant>
    <interactant intactId="EBI-15637215">
        <id>Q08209-1</id>
        <label>PPP3CA</label>
    </interactant>
    <organismsDiffer>true</organismsDiffer>
    <experiments>2</experiments>
</comment>
<comment type="subcellular location">
    <subcellularLocation>
        <location evidence="1">Host nucleus</location>
    </subcellularLocation>
    <subcellularLocation>
        <location evidence="1">Host cytoplasm</location>
    </subcellularLocation>
    <text evidence="1">Binding to host PPP3CA/Calcineurin may mask the second nuclear localization signal thereby contributing to the cytoplasmic retention of A238L.</text>
</comment>
<comment type="induction">
    <text evidence="6">Expressed in the early phase of the viral replicative cycle.</text>
</comment>
<comment type="domain">
    <text evidence="3">The C-terminal region contains the docking motifs PxIxITxC and FLCV, which are required and sufficient for binding to host calcineurin.</text>
</comment>
<comment type="PTM">
    <text evidence="1">The protein exists in a 28 kDa and a 32 kDa form, probably due to post-translational modifications which are neither phosphorylation, nor sumoylation.</text>
</comment>
<comment type="similarity">
    <text evidence="6">Belongs to the asfivirus A238L family.</text>
</comment>
<name>IKBL_ASFM2</name>
<feature type="chain" id="PRO_0000372838" description="IkB-like protein">
    <location>
        <begin position="1"/>
        <end position="239"/>
    </location>
</feature>
<feature type="repeat" description="ANK 1">
    <location>
        <begin position="48"/>
        <end position="77"/>
    </location>
</feature>
<feature type="repeat" description="ANK 2">
    <location>
        <begin position="87"/>
        <end position="116"/>
    </location>
</feature>
<feature type="repeat" description="ANK 3">
    <location>
        <begin position="124"/>
        <end position="153"/>
    </location>
</feature>
<feature type="repeat" description="ANK 4">
    <location>
        <begin position="158"/>
        <end position="187"/>
    </location>
</feature>
<feature type="short sequence motif" description="Nuclear localization signal" evidence="1">
    <location>
        <begin position="81"/>
        <end position="87"/>
    </location>
</feature>
<feature type="short sequence motif" description="Nuclear localization signal" evidence="1">
    <location>
        <begin position="203"/>
        <end position="214"/>
    </location>
</feature>
<feature type="short sequence motif" description="PxIxITxC motif; Interaction with host PPP3CA" evidence="2 3">
    <location>
        <begin position="206"/>
        <end position="213"/>
    </location>
</feature>
<feature type="short sequence motif" description="FLCV motif" evidence="3">
    <location>
        <begin position="228"/>
        <end position="231"/>
    </location>
</feature>
<feature type="mutagenesis site" description="No defect in the competitive inhibition of PPP3CA-mediated dephosphorylation of a peptide substrate. Reduced interaction with PPP3CA while maintaining the competitive inhibition of PPP3CA-mediated dephosphorylation of a peptide substrate; when associated with 206-A--A-211. Reduced interaction with PPP3CA and severe loss of competitive inhibition of PPP3CA-mediated dephosphorylation of a peptide substrate; when associated with 228-A--A-232." evidence="3">
    <location>
        <begin position="1"/>
        <end position="199"/>
    </location>
</feature>
<feature type="mutagenesis site" description="Partial loss of NFAT-mediated transcription inhibition. Reduced interaction with PPP3CA while maintaining the competitive inhibition of PPP3CA-mediated dephosphorylation of a peptide substrate; when associated with 1-M--H-199 DEL." evidence="3">
    <original>PKIIIT</original>
    <variation>AKAIAA</variation>
    <location>
        <begin position="206"/>
        <end position="211"/>
    </location>
</feature>
<feature type="mutagenesis site" description="Partial loss of NFAT-mediated transcription inhibition. Reduced interaction with PPP3CA and severe loss of competitive inhibition of PPP3CA-mediated dephosphorylation of a peptide substrate; when associated with 1-M--H-199 DEL." evidence="3">
    <original>FLCVK</original>
    <variation>AACAA</variation>
    <location>
        <begin position="228"/>
        <end position="232"/>
    </location>
</feature>
<feature type="strand" evidence="7">
    <location>
        <begin position="207"/>
        <end position="211"/>
    </location>
</feature>
<keyword id="KW-0002">3D-structure</keyword>
<keyword id="KW-0040">ANK repeat</keyword>
<keyword id="KW-0244">Early protein</keyword>
<keyword id="KW-1035">Host cytoplasm</keyword>
<keyword id="KW-1048">Host nucleus</keyword>
<keyword id="KW-0945">Host-virus interaction</keyword>
<keyword id="KW-1100">Inhibition of host NF-kappa-B by virus</keyword>
<keyword id="KW-0677">Repeat</keyword>
<keyword id="KW-0832">Ubl conjugation</keyword>
<protein>
    <recommendedName>
        <fullName>IkB-like protein</fullName>
    </recommendedName>
    <alternativeName>
        <fullName>Ankyrin repeat domain-containing protein A238L</fullName>
    </alternativeName>
    <alternativeName>
        <fullName>p28</fullName>
    </alternativeName>
</protein>
<evidence type="ECO:0000250" key="1">
    <source>
        <dbReference type="UniProtKB" id="Q76U48"/>
    </source>
</evidence>
<evidence type="ECO:0000269" key="2">
    <source>
    </source>
</evidence>
<evidence type="ECO:0000269" key="3">
    <source>
    </source>
</evidence>
<evidence type="ECO:0000269" key="4">
    <source>
    </source>
</evidence>
<evidence type="ECO:0000269" key="5">
    <source>
    </source>
</evidence>
<evidence type="ECO:0000305" key="6"/>
<evidence type="ECO:0007829" key="7">
    <source>
        <dbReference type="PDB" id="4F0Z"/>
    </source>
</evidence>
<accession>O36972</accession>
<organism>
    <name type="scientific">African swine fever virus (isolate Tick/Malawi/Lil 20-1/1983)</name>
    <name type="common">ASFV</name>
    <dbReference type="NCBI Taxonomy" id="10500"/>
    <lineage>
        <taxon>Viruses</taxon>
        <taxon>Varidnaviria</taxon>
        <taxon>Bamfordvirae</taxon>
        <taxon>Nucleocytoviricota</taxon>
        <taxon>Pokkesviricetes</taxon>
        <taxon>Asfuvirales</taxon>
        <taxon>Asfarviridae</taxon>
        <taxon>Asfivirus</taxon>
        <taxon>African swine fever virus</taxon>
    </lineage>
</organism>